<comment type="function">
    <text evidence="3 4">Required for optimal tip growth of pollen tube; dose-dependent negative regulator of exocyst function in pollen tube growth and cellular architecture at the pollen tube tip, probably by modulating membrane trafficking and exocytosis dynamics.</text>
</comment>
<comment type="subunit">
    <text evidence="3 4">Interacts with ROH1A and ROH1D independently of its phosphorylation status.</text>
</comment>
<comment type="subcellular location">
    <subcellularLocation>
        <location evidence="3 4">Cytoplasm</location>
    </subcellularLocation>
    <text evidence="3">Localized in the cytoplasm of pollen tubes and trichoblast cells.</text>
</comment>
<comment type="tissue specificity">
    <text evidence="2 3 5">Expressed in anthers, pollen and root trichoblast cells (PubMed:20943851, PubMed:28356503, Ref.6). Also observed in anther tapetum (Ref.6).</text>
</comment>
<comment type="developmental stage">
    <text evidence="2 5">Strongly expressed in pollen and anther tapetum at later stages of pollen development, from post-meiotic pollen, in mature pollen and after pollen release (Ref.6). In roots, observed during root hair development (PubMed:20943851).</text>
</comment>
<comment type="PTM">
    <text evidence="4">Phosphorylation on Ser and Thr residues promotes its ability to repress pollen tube growth and to regulate cellular architecture at the pollen tube tip.</text>
</comment>
<comment type="disruption phenotype">
    <text evidence="3 4">Partial male-specific transmission defect due to aberrant pollen tube growth (PubMed:28356503). Stop-and-go growth dynamics where phases with abnormally high growth rates are interrupted by pollen tube tip bursts associated with decreased thickness of the tip cell wall and recovery, ultimately resulting in pollen tube rupture; this phenotype is partially rescued by the phospho-dead (PD) mutant A-212; A-215; A-217; A-446; A-494 and A-605, but not by the phospho-mimetic (PM) mutant E-212; D-215; D-217; E-446; D-494 and D-605 (PubMed:28356503, PubMed:33519861). Complete inactivation of pollen-specific transmission due to abnormal pollen tube growth in plants lacking both EXO70C1 and EXO70C2 (PubMed:28356503).</text>
</comment>
<comment type="similarity">
    <text evidence="7">Belongs to the EXO70 family.</text>
</comment>
<name>E70C2_ARATH</name>
<gene>
    <name evidence="6" type="primary">EXO70C2</name>
    <name evidence="8" type="ordered locus">At5g13990</name>
    <name evidence="9" type="ORF">MAC12.17</name>
</gene>
<accession>Q9FFX6</accession>
<dbReference type="EMBL" id="AB005230">
    <property type="protein sequence ID" value="BAB11127.1"/>
    <property type="molecule type" value="Genomic_DNA"/>
</dbReference>
<dbReference type="EMBL" id="CP002688">
    <property type="protein sequence ID" value="AED91971.1"/>
    <property type="molecule type" value="Genomic_DNA"/>
</dbReference>
<dbReference type="EMBL" id="BT003863">
    <property type="protein sequence ID" value="AAO41913.1"/>
    <property type="molecule type" value="mRNA"/>
</dbReference>
<dbReference type="EMBL" id="BT006148">
    <property type="protein sequence ID" value="AAP04133.1"/>
    <property type="molecule type" value="mRNA"/>
</dbReference>
<dbReference type="RefSeq" id="NP_196903.1">
    <property type="nucleotide sequence ID" value="NM_121402.2"/>
</dbReference>
<dbReference type="SMR" id="Q9FFX6"/>
<dbReference type="FunCoup" id="Q9FFX6">
    <property type="interactions" value="3282"/>
</dbReference>
<dbReference type="STRING" id="3702.Q9FFX6"/>
<dbReference type="iPTMnet" id="Q9FFX6"/>
<dbReference type="PaxDb" id="3702-AT5G13990.1"/>
<dbReference type="ProteomicsDB" id="179324"/>
<dbReference type="EnsemblPlants" id="AT5G13990.1">
    <property type="protein sequence ID" value="AT5G13990.1"/>
    <property type="gene ID" value="AT5G13990"/>
</dbReference>
<dbReference type="GeneID" id="831247"/>
<dbReference type="Gramene" id="AT5G13990.1">
    <property type="protein sequence ID" value="AT5G13990.1"/>
    <property type="gene ID" value="AT5G13990"/>
</dbReference>
<dbReference type="KEGG" id="ath:AT5G13990"/>
<dbReference type="Araport" id="AT5G13990"/>
<dbReference type="TAIR" id="AT5G13990">
    <property type="gene designation" value="EXO70C2"/>
</dbReference>
<dbReference type="eggNOG" id="KOG2344">
    <property type="taxonomic scope" value="Eukaryota"/>
</dbReference>
<dbReference type="HOGENOM" id="CLU_010236_2_1_1"/>
<dbReference type="InParanoid" id="Q9FFX6"/>
<dbReference type="OMA" id="FPQECAN"/>
<dbReference type="OrthoDB" id="1922221at2759"/>
<dbReference type="PRO" id="PR:Q9FFX6"/>
<dbReference type="Proteomes" id="UP000006548">
    <property type="component" value="Chromosome 5"/>
</dbReference>
<dbReference type="ExpressionAtlas" id="Q9FFX6">
    <property type="expression patterns" value="baseline and differential"/>
</dbReference>
<dbReference type="GO" id="GO:0005737">
    <property type="term" value="C:cytoplasm"/>
    <property type="evidence" value="ECO:0000314"/>
    <property type="project" value="UniProtKB"/>
</dbReference>
<dbReference type="GO" id="GO:0005829">
    <property type="term" value="C:cytosol"/>
    <property type="evidence" value="ECO:0000314"/>
    <property type="project" value="TAIR"/>
</dbReference>
<dbReference type="GO" id="GO:0000145">
    <property type="term" value="C:exocyst"/>
    <property type="evidence" value="ECO:0007669"/>
    <property type="project" value="InterPro"/>
</dbReference>
<dbReference type="GO" id="GO:0005634">
    <property type="term" value="C:nucleus"/>
    <property type="evidence" value="ECO:0000314"/>
    <property type="project" value="TAIR"/>
</dbReference>
<dbReference type="GO" id="GO:0090406">
    <property type="term" value="C:pollen tube"/>
    <property type="evidence" value="ECO:0000314"/>
    <property type="project" value="TAIR"/>
</dbReference>
<dbReference type="GO" id="GO:0005546">
    <property type="term" value="F:phosphatidylinositol-4,5-bisphosphate binding"/>
    <property type="evidence" value="ECO:0007669"/>
    <property type="project" value="InterPro"/>
</dbReference>
<dbReference type="GO" id="GO:0006887">
    <property type="term" value="P:exocytosis"/>
    <property type="evidence" value="ECO:0007669"/>
    <property type="project" value="UniProtKB-KW"/>
</dbReference>
<dbReference type="GO" id="GO:0015031">
    <property type="term" value="P:protein transport"/>
    <property type="evidence" value="ECO:0007669"/>
    <property type="project" value="UniProtKB-KW"/>
</dbReference>
<dbReference type="GO" id="GO:0080092">
    <property type="term" value="P:regulation of pollen tube growth"/>
    <property type="evidence" value="ECO:0000315"/>
    <property type="project" value="UniProtKB"/>
</dbReference>
<dbReference type="FunFam" id="1.20.1280.170:FF:000003">
    <property type="entry name" value="Exocyst subunit Exo70 family protein"/>
    <property type="match status" value="1"/>
</dbReference>
<dbReference type="Gene3D" id="1.20.1280.170">
    <property type="entry name" value="Exocyst complex component Exo70"/>
    <property type="match status" value="1"/>
</dbReference>
<dbReference type="InterPro" id="IPR016159">
    <property type="entry name" value="Cullin_repeat-like_dom_sf"/>
</dbReference>
<dbReference type="InterPro" id="IPR004140">
    <property type="entry name" value="Exo70"/>
</dbReference>
<dbReference type="InterPro" id="IPR046364">
    <property type="entry name" value="Exo70_C"/>
</dbReference>
<dbReference type="PANTHER" id="PTHR12542:SF93">
    <property type="entry name" value="EXOCYST COMPLEX COMPONENT EXO70C2"/>
    <property type="match status" value="1"/>
</dbReference>
<dbReference type="PANTHER" id="PTHR12542">
    <property type="entry name" value="EXOCYST COMPLEX PROTEIN EXO70"/>
    <property type="match status" value="1"/>
</dbReference>
<dbReference type="Pfam" id="PF03081">
    <property type="entry name" value="Exo70_C"/>
    <property type="match status" value="1"/>
</dbReference>
<dbReference type="Pfam" id="PF20669">
    <property type="entry name" value="Exo70_N"/>
    <property type="match status" value="1"/>
</dbReference>
<dbReference type="SUPFAM" id="SSF74788">
    <property type="entry name" value="Cullin repeat-like"/>
    <property type="match status" value="1"/>
</dbReference>
<feature type="chain" id="PRO_0000458273" description="Exocyst complex component EXO70C2">
    <location>
        <begin position="1"/>
        <end position="695"/>
    </location>
</feature>
<feature type="region of interest" description="Disordered" evidence="1">
    <location>
        <begin position="1"/>
        <end position="71"/>
    </location>
</feature>
<feature type="region of interest" description="Disordered" evidence="1">
    <location>
        <begin position="210"/>
        <end position="229"/>
    </location>
</feature>
<feature type="compositionally biased region" description="Basic and acidic residues" evidence="1">
    <location>
        <begin position="1"/>
        <end position="36"/>
    </location>
</feature>
<feature type="modified residue" description="Phosphothreonine" evidence="4">
    <location>
        <position position="212"/>
    </location>
</feature>
<feature type="modified residue" description="Phosphoserine" evidence="4">
    <location>
        <position position="215"/>
    </location>
</feature>
<feature type="modified residue" description="Phosphoserine" evidence="4">
    <location>
        <position position="217"/>
    </location>
</feature>
<feature type="modified residue" description="Phosphothreonine" evidence="4">
    <location>
        <position position="446"/>
    </location>
</feature>
<feature type="modified residue" description="Phosphoserine" evidence="4">
    <location>
        <position position="494"/>
    </location>
</feature>
<feature type="modified residue" description="Phosphoserine" evidence="4">
    <location>
        <position position="605"/>
    </location>
</feature>
<feature type="mutagenesis site" description="Phospho-dead (PD) mutant with reduced inhibitory effects on pollen tube growth; when associated with A-215; A-217; A-446; A-494 and A-605." evidence="4">
    <original>T</original>
    <variation>A</variation>
    <location>
        <position position="212"/>
    </location>
</feature>
<feature type="mutagenesis site" description="Phospho-mimetic (PM) mutant with constitutive inhibitory effects on pollen tube growth; when associated with D-215; D-217; E-446; D-494 and D-605." evidence="4">
    <original>T</original>
    <variation>E</variation>
    <location>
        <position position="212"/>
    </location>
</feature>
<feature type="mutagenesis site" description="Phospho-dead (PD) mutant with reduced inhibitory effects on pollen tube growth; when associated with A-212; A-217; A-446; A-494 and A-605." evidence="4">
    <original>S</original>
    <variation>A</variation>
    <location>
        <position position="215"/>
    </location>
</feature>
<feature type="mutagenesis site" description="Phospho-mimetic (PM) mutant with constitutive inhibitory effects on pollen tube growth; when associated with E-212; D-217; E-446; D-494 and D-605." evidence="4">
    <original>S</original>
    <variation>D</variation>
    <location>
        <position position="215"/>
    </location>
</feature>
<feature type="mutagenesis site" description="Phospho-dead (PD) mutant with reduced inhibitory effects on pollen tube growth; when associated with A-212; A-215; A-446; A-494 and A-605." evidence="4">
    <original>S</original>
    <variation>A</variation>
    <location>
        <position position="217"/>
    </location>
</feature>
<feature type="mutagenesis site" description="Phospho-mimetic (PM) mutant with constitutive inhibitory effects on pollen tube growth; when associated with E-212; D-215; E-446; D-494 and D-605." evidence="4">
    <original>S</original>
    <variation>D</variation>
    <location>
        <position position="217"/>
    </location>
</feature>
<feature type="mutagenesis site" description="Phospho-dead (PD) mutant with reduced inhibitory effects on pollen tube growth; when associated with A-212; A-215; A-217; A-494 and A-605." evidence="4">
    <original>T</original>
    <variation>A</variation>
    <location>
        <position position="446"/>
    </location>
</feature>
<feature type="mutagenesis site" description="Phospho-mimetic (PM) mutant with constitutive inhibitory effects on pollen tube growth; when associated with E-212; D-215; D-217; D-494 and D-605." evidence="4">
    <original>T</original>
    <variation>E</variation>
    <location>
        <position position="446"/>
    </location>
</feature>
<feature type="mutagenesis site" description="Phospho-dead (PD) mutant with reduced inhibitory effects on pollen tube growth; when associated with A-212; A-215; A-217; A-446 and A-605." evidence="4">
    <original>S</original>
    <variation>A</variation>
    <location>
        <position position="494"/>
    </location>
</feature>
<feature type="mutagenesis site" description="Phospho-mimetic (PM) mutant with constitutive inhibitory effects on pollen tube growth; when associated with E-212; D-215; D-217; E-446 and D-605." evidence="4">
    <original>S</original>
    <variation>D</variation>
    <location>
        <position position="494"/>
    </location>
</feature>
<feature type="mutagenesis site" description="Phospho-dead (PD) mutant with reduced inhibitory effects on pollen tube growth; when associated with A-212; A-215; A-217; A-446 and A-494." evidence="4">
    <original>S</original>
    <variation>A</variation>
    <location>
        <position position="605"/>
    </location>
</feature>
<feature type="mutagenesis site" description="Phospho-mimetic (PM) mutant with constitutive inhibitory effects on pollen tube growth; when associated with E-212; D-215; D-217; E-446 and D-494." evidence="4">
    <original>S</original>
    <variation>D</variation>
    <location>
        <position position="605"/>
    </location>
</feature>
<proteinExistence type="evidence at protein level"/>
<reference key="1">
    <citation type="journal article" date="1997" name="DNA Res.">
        <title>Structural analysis of Arabidopsis thaliana chromosome 5. I. Sequence features of the 1.6 Mb regions covered by twenty physically assigned P1 clones.</title>
        <authorList>
            <person name="Sato S."/>
            <person name="Kotani H."/>
            <person name="Nakamura Y."/>
            <person name="Kaneko T."/>
            <person name="Asamizu E."/>
            <person name="Fukami M."/>
            <person name="Miyajima N."/>
            <person name="Tabata S."/>
        </authorList>
    </citation>
    <scope>NUCLEOTIDE SEQUENCE [LARGE SCALE GENOMIC DNA]</scope>
    <source>
        <strain>cv. Columbia</strain>
    </source>
</reference>
<reference key="2">
    <citation type="journal article" date="2017" name="Plant J.">
        <title>Araport11: a complete reannotation of the Arabidopsis thaliana reference genome.</title>
        <authorList>
            <person name="Cheng C.Y."/>
            <person name="Krishnakumar V."/>
            <person name="Chan A.P."/>
            <person name="Thibaud-Nissen F."/>
            <person name="Schobel S."/>
            <person name="Town C.D."/>
        </authorList>
    </citation>
    <scope>GENOME REANNOTATION</scope>
    <source>
        <strain>cv. Columbia</strain>
    </source>
</reference>
<reference key="3">
    <citation type="journal article" date="2003" name="Science">
        <title>Empirical analysis of transcriptional activity in the Arabidopsis genome.</title>
        <authorList>
            <person name="Yamada K."/>
            <person name="Lim J."/>
            <person name="Dale J.M."/>
            <person name="Chen H."/>
            <person name="Shinn P."/>
            <person name="Palm C.J."/>
            <person name="Southwick A.M."/>
            <person name="Wu H.C."/>
            <person name="Kim C.J."/>
            <person name="Nguyen M."/>
            <person name="Pham P.K."/>
            <person name="Cheuk R.F."/>
            <person name="Karlin-Newmann G."/>
            <person name="Liu S.X."/>
            <person name="Lam B."/>
            <person name="Sakano H."/>
            <person name="Wu T."/>
            <person name="Yu G."/>
            <person name="Miranda M."/>
            <person name="Quach H.L."/>
            <person name="Tripp M."/>
            <person name="Chang C.H."/>
            <person name="Lee J.M."/>
            <person name="Toriumi M.J."/>
            <person name="Chan M.M."/>
            <person name="Tang C.C."/>
            <person name="Onodera C.S."/>
            <person name="Deng J.M."/>
            <person name="Akiyama K."/>
            <person name="Ansari Y."/>
            <person name="Arakawa T."/>
            <person name="Banh J."/>
            <person name="Banno F."/>
            <person name="Bowser L."/>
            <person name="Brooks S.Y."/>
            <person name="Carninci P."/>
            <person name="Chao Q."/>
            <person name="Choy N."/>
            <person name="Enju A."/>
            <person name="Goldsmith A.D."/>
            <person name="Gurjal M."/>
            <person name="Hansen N.F."/>
            <person name="Hayashizaki Y."/>
            <person name="Johnson-Hopson C."/>
            <person name="Hsuan V.W."/>
            <person name="Iida K."/>
            <person name="Karnes M."/>
            <person name="Khan S."/>
            <person name="Koesema E."/>
            <person name="Ishida J."/>
            <person name="Jiang P.X."/>
            <person name="Jones T."/>
            <person name="Kawai J."/>
            <person name="Kamiya A."/>
            <person name="Meyers C."/>
            <person name="Nakajima M."/>
            <person name="Narusaka M."/>
            <person name="Seki M."/>
            <person name="Sakurai T."/>
            <person name="Satou M."/>
            <person name="Tamse R."/>
            <person name="Vaysberg M."/>
            <person name="Wallender E.K."/>
            <person name="Wong C."/>
            <person name="Yamamura Y."/>
            <person name="Yuan S."/>
            <person name="Shinozaki K."/>
            <person name="Davis R.W."/>
            <person name="Theologis A."/>
            <person name="Ecker J.R."/>
        </authorList>
    </citation>
    <scope>NUCLEOTIDE SEQUENCE [LARGE SCALE MRNA]</scope>
    <source>
        <strain>cv. Columbia</strain>
    </source>
</reference>
<reference key="4">
    <citation type="journal article" date="2010" name="Plant Physiol.">
        <title>Expression and functional analyses of EXO70 genes in Arabidopsis implicate their roles in regulating cell type-specific exocytosis.</title>
        <authorList>
            <person name="Li S."/>
            <person name="van Os G.M.A."/>
            <person name="Ren S."/>
            <person name="Yu D."/>
            <person name="Ketelaar T."/>
            <person name="Emons A.M.C."/>
            <person name="Liu C.-M."/>
        </authorList>
    </citation>
    <scope>TISSUE SPECIFICITY</scope>
    <scope>DEVELOPMENTAL STAGE</scope>
</reference>
<reference key="5">
    <citation type="journal article" date="2016" name="Front. Cell Dev. Biol.">
        <title>Tethering complexes in the Arabidopsis endomembrane system.</title>
        <authorList>
            <person name="Vukasinovic N."/>
            <person name="Zarsky V."/>
        </authorList>
    </citation>
    <scope>REVIEW</scope>
</reference>
<reference key="6">
    <citation type="journal article" date="2016" name="Plant Cell Tissue Organ Cult.">
        <title>Analysis of EXO70C2 expression revealed its specific association with late stages of pollen development.</title>
        <authorList>
            <person name="Lai K.S."/>
        </authorList>
    </citation>
    <scope>TISSUE SPECIFICITY</scope>
    <scope>DEVELOPMENTAL STAGE</scope>
    <source>
        <strain>cv. C24</strain>
    </source>
</reference>
<reference key="7">
    <citation type="journal article" date="2017" name="Plant Physiol.">
        <title>EXO70C2 is a key regulatory factor for optimal tip growth of pollen.</title>
        <authorList>
            <person name="Synek L."/>
            <person name="Vukasinovic N."/>
            <person name="Kulich I."/>
            <person name="Hala M."/>
            <person name="Aldorfova K."/>
            <person name="Fendrych M."/>
            <person name="Zarsky V."/>
        </authorList>
    </citation>
    <scope>FUNCTION</scope>
    <scope>DISRUPTION PHENOTYPE</scope>
    <scope>TISSUE SPECIFICITY</scope>
    <scope>SUBCELLULAR LOCATION</scope>
    <scope>INTERACTION WITH ROH1A</scope>
    <source>
        <strain>cv. Columbia</strain>
        <strain>cv. Landsberg erecta</strain>
    </source>
</reference>
<reference key="8">
    <citation type="journal article" date="2020" name="Front. Plant Sci.">
        <title>Regulation of exocyst function in pollen tube growth by phosphorylation of exocyst subunit EXO70C2.</title>
        <authorList>
            <person name="Saccomanno A."/>
            <person name="Potocky M."/>
            <person name="Pejchar P."/>
            <person name="Hala M."/>
            <person name="Shikata H."/>
            <person name="Schwechheimer C."/>
            <person name="Zarsky V."/>
        </authorList>
    </citation>
    <scope>FUNCTION</scope>
    <scope>DISRUPTION PHENOTYPE</scope>
    <scope>MUTAGENESIS OF THR-212; SER-215; SER-217; THR-446; SER-494 AND SER-605</scope>
    <scope>PHOSPHORYLATION AT THR-212; SER-215; SER-217; THR-446; SER-494 AND SER-605</scope>
    <scope>SUBCELLULAR LOCATION</scope>
    <scope>INTERACTION WITH ROH1A AND ROH1D</scope>
    <source>
        <strain>cv. Columbia</strain>
    </source>
</reference>
<organism>
    <name type="scientific">Arabidopsis thaliana</name>
    <name type="common">Mouse-ear cress</name>
    <dbReference type="NCBI Taxonomy" id="3702"/>
    <lineage>
        <taxon>Eukaryota</taxon>
        <taxon>Viridiplantae</taxon>
        <taxon>Streptophyta</taxon>
        <taxon>Embryophyta</taxon>
        <taxon>Tracheophyta</taxon>
        <taxon>Spermatophyta</taxon>
        <taxon>Magnoliopsida</taxon>
        <taxon>eudicotyledons</taxon>
        <taxon>Gunneridae</taxon>
        <taxon>Pentapetalae</taxon>
        <taxon>rosids</taxon>
        <taxon>malvids</taxon>
        <taxon>Brassicales</taxon>
        <taxon>Brassicaceae</taxon>
        <taxon>Camelineae</taxon>
        <taxon>Arabidopsis</taxon>
    </lineage>
</organism>
<evidence type="ECO:0000256" key="1">
    <source>
        <dbReference type="SAM" id="MobiDB-lite"/>
    </source>
</evidence>
<evidence type="ECO:0000269" key="2">
    <source>
    </source>
</evidence>
<evidence type="ECO:0000269" key="3">
    <source>
    </source>
</evidence>
<evidence type="ECO:0000269" key="4">
    <source>
    </source>
</evidence>
<evidence type="ECO:0000269" key="5">
    <source ref="6"/>
</evidence>
<evidence type="ECO:0000303" key="6">
    <source>
    </source>
</evidence>
<evidence type="ECO:0000305" key="7"/>
<evidence type="ECO:0000312" key="8">
    <source>
        <dbReference type="Araport" id="AT5G13990"/>
    </source>
</evidence>
<evidence type="ECO:0000312" key="9">
    <source>
        <dbReference type="EMBL" id="BAB11127.1"/>
    </source>
</evidence>
<sequence>MEKNDKDPDHDDKSKGDEKGDVVSDAHPSDDAHHQDGISNENVDVVGNAETDHQDPGDNNVDKVSQGEEAPEIRQTLESLSEELDQFLPTLSLHMEEHKDSTEEKGEDGYFQIPQFVGKFLDLFEEKLSKYDSGEPKTVWYQDPEEVSSLLEAVDRVSKLMGLLLNTKSCLDHHESLINHAGSIQQRAMAFLEDEFRIILEESVTKESVVVTDDSNSQRRSTADQQDHQNDVVVSQDHDQMLVPECGDQEIEYPGYPEDVVVVLRKIAEKMKAGGYGWECREVYLVGRRNILMRTLKQDCEFEKVSIDEVQKMSWDTLEREIPIWNKTFKDCSSLFFPGELKLAERIFPGDEGNLFCIVTHGLAIQFLGFAEAVAMTRRSTEKLFKILDIYETLRDSFPAMEELFPEELRSELRNEVTSARSRLGETAIHIFCDLEHSIKSDSSKTPVPGGAVHPLTRYTMNYLKYSCEYKDTLEQVFKSHSKMEREEEEPVESGNSAFASQLMRIMELLDGNLETKSKQYKDIPLSCIFMMNNGRYIVQKIKGSAEIHEVMGDTWCRRRSSELRNYHKNYQRETWGKLLGFLGHEGLMHNGKIVKPNLKERFKSFNATFDEIHKTQTTWVVNDEQLQSELRVSITAVMIPAYRAFMARFGQYLDPGRQTEKYVKYQPEDIEDLIDQLFEGNTSSSSTATARRRT</sequence>
<keyword id="KW-0963">Cytoplasm</keyword>
<keyword id="KW-0268">Exocytosis</keyword>
<keyword id="KW-0597">Phosphoprotein</keyword>
<keyword id="KW-0653">Protein transport</keyword>
<keyword id="KW-1185">Reference proteome</keyword>
<keyword id="KW-0813">Transport</keyword>
<protein>
    <recommendedName>
        <fullName evidence="6">Exocyst complex component EXO70C2</fullName>
        <shortName evidence="6">AtExo70C2</shortName>
    </recommendedName>
    <alternativeName>
        <fullName evidence="6">Exocyst subunit Exo70 family protein C2</fullName>
    </alternativeName>
</protein>